<accession>A5U0A6</accession>
<protein>
    <recommendedName>
        <fullName evidence="1">Large ribosomal subunit protein uL18</fullName>
    </recommendedName>
    <alternativeName>
        <fullName evidence="2">50S ribosomal protein L18</fullName>
    </alternativeName>
</protein>
<evidence type="ECO:0000255" key="1">
    <source>
        <dbReference type="HAMAP-Rule" id="MF_01337"/>
    </source>
</evidence>
<evidence type="ECO:0000305" key="2"/>
<evidence type="ECO:0007829" key="3">
    <source>
        <dbReference type="PDB" id="7F0D"/>
    </source>
</evidence>
<dbReference type="EMBL" id="CP000611">
    <property type="protein sequence ID" value="ABQ72456.1"/>
    <property type="molecule type" value="Genomic_DNA"/>
</dbReference>
<dbReference type="RefSeq" id="WP_003403677.1">
    <property type="nucleotide sequence ID" value="NZ_CP016972.1"/>
</dbReference>
<dbReference type="PDB" id="7F0D">
    <property type="method" value="EM"/>
    <property type="resolution" value="3.30 A"/>
    <property type="chains" value="O=1-122"/>
</dbReference>
<dbReference type="PDBsum" id="7F0D"/>
<dbReference type="SMR" id="A5U0A6"/>
<dbReference type="GeneID" id="45424685"/>
<dbReference type="KEGG" id="mra:MRA_0728"/>
<dbReference type="eggNOG" id="COG0256">
    <property type="taxonomic scope" value="Bacteria"/>
</dbReference>
<dbReference type="HOGENOM" id="CLU_098841_0_1_11"/>
<dbReference type="Proteomes" id="UP000001988">
    <property type="component" value="Chromosome"/>
</dbReference>
<dbReference type="GO" id="GO:0022625">
    <property type="term" value="C:cytosolic large ribosomal subunit"/>
    <property type="evidence" value="ECO:0007669"/>
    <property type="project" value="TreeGrafter"/>
</dbReference>
<dbReference type="GO" id="GO:0008097">
    <property type="term" value="F:5S rRNA binding"/>
    <property type="evidence" value="ECO:0007669"/>
    <property type="project" value="TreeGrafter"/>
</dbReference>
<dbReference type="GO" id="GO:0003735">
    <property type="term" value="F:structural constituent of ribosome"/>
    <property type="evidence" value="ECO:0007669"/>
    <property type="project" value="InterPro"/>
</dbReference>
<dbReference type="GO" id="GO:0006412">
    <property type="term" value="P:translation"/>
    <property type="evidence" value="ECO:0007669"/>
    <property type="project" value="UniProtKB-UniRule"/>
</dbReference>
<dbReference type="CDD" id="cd00432">
    <property type="entry name" value="Ribosomal_L18_L5e"/>
    <property type="match status" value="1"/>
</dbReference>
<dbReference type="FunFam" id="3.30.420.100:FF:000001">
    <property type="entry name" value="50S ribosomal protein L18"/>
    <property type="match status" value="1"/>
</dbReference>
<dbReference type="Gene3D" id="3.30.420.100">
    <property type="match status" value="1"/>
</dbReference>
<dbReference type="HAMAP" id="MF_01337_B">
    <property type="entry name" value="Ribosomal_uL18_B"/>
    <property type="match status" value="1"/>
</dbReference>
<dbReference type="InterPro" id="IPR004389">
    <property type="entry name" value="Ribosomal_uL18_bac-type"/>
</dbReference>
<dbReference type="InterPro" id="IPR005484">
    <property type="entry name" value="Ribosomal_uL18_bac/euk"/>
</dbReference>
<dbReference type="NCBIfam" id="TIGR00060">
    <property type="entry name" value="L18_bact"/>
    <property type="match status" value="1"/>
</dbReference>
<dbReference type="PANTHER" id="PTHR12899">
    <property type="entry name" value="39S RIBOSOMAL PROTEIN L18, MITOCHONDRIAL"/>
    <property type="match status" value="1"/>
</dbReference>
<dbReference type="PANTHER" id="PTHR12899:SF3">
    <property type="entry name" value="LARGE RIBOSOMAL SUBUNIT PROTEIN UL18M"/>
    <property type="match status" value="1"/>
</dbReference>
<dbReference type="Pfam" id="PF00861">
    <property type="entry name" value="Ribosomal_L18p"/>
    <property type="match status" value="1"/>
</dbReference>
<dbReference type="SUPFAM" id="SSF53137">
    <property type="entry name" value="Translational machinery components"/>
    <property type="match status" value="1"/>
</dbReference>
<organism>
    <name type="scientific">Mycobacterium tuberculosis (strain ATCC 25177 / H37Ra)</name>
    <dbReference type="NCBI Taxonomy" id="419947"/>
    <lineage>
        <taxon>Bacteria</taxon>
        <taxon>Bacillati</taxon>
        <taxon>Actinomycetota</taxon>
        <taxon>Actinomycetes</taxon>
        <taxon>Mycobacteriales</taxon>
        <taxon>Mycobacteriaceae</taxon>
        <taxon>Mycobacterium</taxon>
        <taxon>Mycobacterium tuberculosis complex</taxon>
    </lineage>
</organism>
<feature type="chain" id="PRO_1000053066" description="Large ribosomal subunit protein uL18">
    <location>
        <begin position="1"/>
        <end position="122"/>
    </location>
</feature>
<feature type="helix" evidence="3">
    <location>
        <begin position="10"/>
        <end position="20"/>
    </location>
</feature>
<feature type="turn" evidence="3">
    <location>
        <begin position="21"/>
        <end position="23"/>
    </location>
</feature>
<feature type="strand" evidence="3">
    <location>
        <begin position="28"/>
        <end position="30"/>
    </location>
</feature>
<feature type="strand" evidence="3">
    <location>
        <begin position="32"/>
        <end position="36"/>
    </location>
</feature>
<feature type="strand" evidence="3">
    <location>
        <begin position="43"/>
        <end position="46"/>
    </location>
</feature>
<feature type="strand" evidence="3">
    <location>
        <begin position="55"/>
        <end position="62"/>
    </location>
</feature>
<feature type="turn" evidence="3">
    <location>
        <begin position="63"/>
        <end position="66"/>
    </location>
</feature>
<feature type="helix" evidence="3">
    <location>
        <begin position="72"/>
        <end position="89"/>
    </location>
</feature>
<feature type="helix" evidence="3">
    <location>
        <begin position="107"/>
        <end position="117"/>
    </location>
</feature>
<gene>
    <name evidence="1" type="primary">rplR</name>
    <name type="ordered locus">MRA_0728</name>
</gene>
<proteinExistence type="evidence at protein level"/>
<sequence length="122" mass="13184">MAQSVSATRRISRLRRHTRLRKKLSGTAERPRLVVHRSARHIHVQLVNDLNGTTVAAASSIEADVRGVPGDKKARSVRVGQLIAERAKAAGIDTVVFDRGGYTYGGRIAALADAARENGLSF</sequence>
<name>RL18_MYCTA</name>
<reference key="1">
    <citation type="journal article" date="2008" name="PLoS ONE">
        <title>Genetic basis of virulence attenuation revealed by comparative genomic analysis of Mycobacterium tuberculosis strain H37Ra versus H37Rv.</title>
        <authorList>
            <person name="Zheng H."/>
            <person name="Lu L."/>
            <person name="Wang B."/>
            <person name="Pu S."/>
            <person name="Zhang X."/>
            <person name="Zhu G."/>
            <person name="Shi W."/>
            <person name="Zhang L."/>
            <person name="Wang H."/>
            <person name="Wang S."/>
            <person name="Zhao G."/>
            <person name="Zhang Y."/>
        </authorList>
    </citation>
    <scope>NUCLEOTIDE SEQUENCE [LARGE SCALE GENOMIC DNA]</scope>
    <source>
        <strain>ATCC 25177 / H37Ra</strain>
    </source>
</reference>
<comment type="function">
    <text evidence="1">This is one of the proteins that bind and probably mediate the attachment of the 5S RNA into the large ribosomal subunit, where it forms part of the central protuberance.</text>
</comment>
<comment type="subunit">
    <text evidence="1">Part of the 50S ribosomal subunit; part of the 5S rRNA/L5/L18/L25 subcomplex. Contacts the 5S and 23S rRNAs.</text>
</comment>
<comment type="similarity">
    <text evidence="1">Belongs to the universal ribosomal protein uL18 family.</text>
</comment>
<keyword id="KW-0002">3D-structure</keyword>
<keyword id="KW-1185">Reference proteome</keyword>
<keyword id="KW-0687">Ribonucleoprotein</keyword>
<keyword id="KW-0689">Ribosomal protein</keyword>
<keyword id="KW-0694">RNA-binding</keyword>
<keyword id="KW-0699">rRNA-binding</keyword>